<organism>
    <name type="scientific">Escherichia coli O157:H7 (strain EC4115 / EHEC)</name>
    <dbReference type="NCBI Taxonomy" id="444450"/>
    <lineage>
        <taxon>Bacteria</taxon>
        <taxon>Pseudomonadati</taxon>
        <taxon>Pseudomonadota</taxon>
        <taxon>Gammaproteobacteria</taxon>
        <taxon>Enterobacterales</taxon>
        <taxon>Enterobacteriaceae</taxon>
        <taxon>Escherichia</taxon>
    </lineage>
</organism>
<feature type="chain" id="PRO_1000198427" description="UPF0325 protein YaeH">
    <location>
        <begin position="1"/>
        <end position="128"/>
    </location>
</feature>
<dbReference type="EMBL" id="CP001164">
    <property type="protein sequence ID" value="ACI39786.1"/>
    <property type="molecule type" value="Genomic_DNA"/>
</dbReference>
<dbReference type="RefSeq" id="WP_000272188.1">
    <property type="nucleotide sequence ID" value="NC_011353.1"/>
</dbReference>
<dbReference type="SMR" id="B5Z0E3"/>
<dbReference type="KEGG" id="ecf:ECH74115_0173"/>
<dbReference type="HOGENOM" id="CLU_136774_0_0_6"/>
<dbReference type="HAMAP" id="MF_01519">
    <property type="entry name" value="UPF0325"/>
    <property type="match status" value="1"/>
</dbReference>
<dbReference type="InterPro" id="IPR020911">
    <property type="entry name" value="UPF0325"/>
</dbReference>
<dbReference type="NCBIfam" id="NF010213">
    <property type="entry name" value="PRK13677.1"/>
    <property type="match status" value="1"/>
</dbReference>
<dbReference type="Pfam" id="PF11944">
    <property type="entry name" value="DUF3461"/>
    <property type="match status" value="1"/>
</dbReference>
<accession>B5Z0E3</accession>
<evidence type="ECO:0000255" key="1">
    <source>
        <dbReference type="HAMAP-Rule" id="MF_01519"/>
    </source>
</evidence>
<name>YAEH_ECO5E</name>
<sequence length="128" mass="15096">MYDNLKSLGITNPEEIDRYSLRQEANNDILKIYFQKDKGEFFAKSVKFKYPRQRKTVVADGVGQGYKEVQEISPNLRYIIDELDQICQRDRSEVDLKRKILDDLRHLESVVTNKISEIEADLEKLTRK</sequence>
<protein>
    <recommendedName>
        <fullName evidence="1">UPF0325 protein YaeH</fullName>
    </recommendedName>
</protein>
<proteinExistence type="inferred from homology"/>
<reference key="1">
    <citation type="journal article" date="2011" name="Proc. Natl. Acad. Sci. U.S.A.">
        <title>Genomic anatomy of Escherichia coli O157:H7 outbreaks.</title>
        <authorList>
            <person name="Eppinger M."/>
            <person name="Mammel M.K."/>
            <person name="Leclerc J.E."/>
            <person name="Ravel J."/>
            <person name="Cebula T.A."/>
        </authorList>
    </citation>
    <scope>NUCLEOTIDE SEQUENCE [LARGE SCALE GENOMIC DNA]</scope>
    <source>
        <strain>EC4115 / EHEC</strain>
    </source>
</reference>
<comment type="similarity">
    <text evidence="1">Belongs to the UPF0325 family.</text>
</comment>
<gene>
    <name evidence="1" type="primary">yaeH</name>
    <name type="ordered locus">ECH74115_0173</name>
</gene>